<feature type="chain" id="PRO_0000368633" description="ATP synthase subunit b">
    <location>
        <begin position="1"/>
        <end position="186"/>
    </location>
</feature>
<feature type="transmembrane region" description="Helical" evidence="1">
    <location>
        <begin position="25"/>
        <end position="45"/>
    </location>
</feature>
<reference key="1">
    <citation type="journal article" date="2004" name="Proc. Natl. Acad. Sci. U.S.A.">
        <title>The complete genomic sequence of Nocardia farcinica IFM 10152.</title>
        <authorList>
            <person name="Ishikawa J."/>
            <person name="Yamashita A."/>
            <person name="Mikami Y."/>
            <person name="Hoshino Y."/>
            <person name="Kurita H."/>
            <person name="Hotta K."/>
            <person name="Shiba T."/>
            <person name="Hattori M."/>
        </authorList>
    </citation>
    <scope>NUCLEOTIDE SEQUENCE [LARGE SCALE GENOMIC DNA]</scope>
    <source>
        <strain>IFM 10152</strain>
    </source>
</reference>
<accession>Q5Z0Y5</accession>
<evidence type="ECO:0000255" key="1">
    <source>
        <dbReference type="HAMAP-Rule" id="MF_01398"/>
    </source>
</evidence>
<proteinExistence type="inferred from homology"/>
<keyword id="KW-0066">ATP synthesis</keyword>
<keyword id="KW-1003">Cell membrane</keyword>
<keyword id="KW-0138">CF(0)</keyword>
<keyword id="KW-0375">Hydrogen ion transport</keyword>
<keyword id="KW-0406">Ion transport</keyword>
<keyword id="KW-0472">Membrane</keyword>
<keyword id="KW-1185">Reference proteome</keyword>
<keyword id="KW-0812">Transmembrane</keyword>
<keyword id="KW-1133">Transmembrane helix</keyword>
<keyword id="KW-0813">Transport</keyword>
<protein>
    <recommendedName>
        <fullName evidence="1">ATP synthase subunit b</fullName>
    </recommendedName>
    <alternativeName>
        <fullName evidence="1">ATP synthase F(0) sector subunit b</fullName>
    </alternativeName>
    <alternativeName>
        <fullName evidence="1">ATPase subunit I</fullName>
    </alternativeName>
    <alternativeName>
        <fullName evidence="1">F-type ATPase subunit b</fullName>
        <shortName evidence="1">F-ATPase subunit b</shortName>
    </alternativeName>
</protein>
<organism>
    <name type="scientific">Nocardia farcinica (strain IFM 10152)</name>
    <dbReference type="NCBI Taxonomy" id="247156"/>
    <lineage>
        <taxon>Bacteria</taxon>
        <taxon>Bacillati</taxon>
        <taxon>Actinomycetota</taxon>
        <taxon>Actinomycetes</taxon>
        <taxon>Mycobacteriales</taxon>
        <taxon>Nocardiaceae</taxon>
        <taxon>Nocardia</taxon>
    </lineage>
</organism>
<comment type="function">
    <text evidence="1">F(1)F(0) ATP synthase produces ATP from ADP in the presence of a proton or sodium gradient. F-type ATPases consist of two structural domains, F(1) containing the extramembraneous catalytic core and F(0) containing the membrane proton channel, linked together by a central stalk and a peripheral stalk. During catalysis, ATP synthesis in the catalytic domain of F(1) is coupled via a rotary mechanism of the central stalk subunits to proton translocation.</text>
</comment>
<comment type="function">
    <text evidence="1">Component of the F(0) channel, it forms part of the peripheral stalk, linking F(1) to F(0).</text>
</comment>
<comment type="subunit">
    <text evidence="1">F-type ATPases have 2 components, F(1) - the catalytic core - and F(0) - the membrane proton channel. F(1) has five subunits: alpha(3), beta(3), gamma(1), delta(1), epsilon(1). F(0) has three main subunits: a(1), b(2) and c(10-14). The alpha and beta chains form an alternating ring which encloses part of the gamma chain. F(1) is attached to F(0) by a central stalk formed by the gamma and epsilon chains, while a peripheral stalk is formed by the delta and b chains.</text>
</comment>
<comment type="subcellular location">
    <subcellularLocation>
        <location evidence="1">Cell membrane</location>
        <topology evidence="1">Single-pass membrane protein</topology>
    </subcellularLocation>
</comment>
<comment type="similarity">
    <text evidence="1">Belongs to the ATPase B chain family.</text>
</comment>
<gene>
    <name evidence="1" type="primary">atpF</name>
    <name type="ordered locus">NFA_10610</name>
</gene>
<dbReference type="EMBL" id="AP006618">
    <property type="protein sequence ID" value="BAD55906.1"/>
    <property type="molecule type" value="Genomic_DNA"/>
</dbReference>
<dbReference type="RefSeq" id="WP_011207591.1">
    <property type="nucleotide sequence ID" value="NC_006361.1"/>
</dbReference>
<dbReference type="SMR" id="Q5Z0Y5"/>
<dbReference type="STRING" id="247156.NFA_10610"/>
<dbReference type="GeneID" id="61131883"/>
<dbReference type="KEGG" id="nfa:NFA_10610"/>
<dbReference type="eggNOG" id="COG0711">
    <property type="taxonomic scope" value="Bacteria"/>
</dbReference>
<dbReference type="HOGENOM" id="CLU_079215_5_2_11"/>
<dbReference type="OrthoDB" id="5242917at2"/>
<dbReference type="Proteomes" id="UP000006820">
    <property type="component" value="Chromosome"/>
</dbReference>
<dbReference type="GO" id="GO:0005886">
    <property type="term" value="C:plasma membrane"/>
    <property type="evidence" value="ECO:0007669"/>
    <property type="project" value="UniProtKB-SubCell"/>
</dbReference>
<dbReference type="GO" id="GO:0045259">
    <property type="term" value="C:proton-transporting ATP synthase complex"/>
    <property type="evidence" value="ECO:0007669"/>
    <property type="project" value="UniProtKB-KW"/>
</dbReference>
<dbReference type="GO" id="GO:0046933">
    <property type="term" value="F:proton-transporting ATP synthase activity, rotational mechanism"/>
    <property type="evidence" value="ECO:0007669"/>
    <property type="project" value="UniProtKB-UniRule"/>
</dbReference>
<dbReference type="GO" id="GO:0046961">
    <property type="term" value="F:proton-transporting ATPase activity, rotational mechanism"/>
    <property type="evidence" value="ECO:0007669"/>
    <property type="project" value="TreeGrafter"/>
</dbReference>
<dbReference type="CDD" id="cd06503">
    <property type="entry name" value="ATP-synt_Fo_b"/>
    <property type="match status" value="1"/>
</dbReference>
<dbReference type="Gene3D" id="1.20.5.620">
    <property type="entry name" value="F1F0 ATP synthase subunit B, membrane domain"/>
    <property type="match status" value="1"/>
</dbReference>
<dbReference type="HAMAP" id="MF_01398">
    <property type="entry name" value="ATP_synth_b_bprime"/>
    <property type="match status" value="1"/>
</dbReference>
<dbReference type="InterPro" id="IPR028987">
    <property type="entry name" value="ATP_synth_B-like_membr_sf"/>
</dbReference>
<dbReference type="InterPro" id="IPR002146">
    <property type="entry name" value="ATP_synth_b/b'su_bac/chlpt"/>
</dbReference>
<dbReference type="InterPro" id="IPR005864">
    <property type="entry name" value="ATP_synth_F0_bsu_bac"/>
</dbReference>
<dbReference type="InterPro" id="IPR050059">
    <property type="entry name" value="ATP_synthase_B_chain"/>
</dbReference>
<dbReference type="NCBIfam" id="TIGR01144">
    <property type="entry name" value="ATP_synt_b"/>
    <property type="match status" value="1"/>
</dbReference>
<dbReference type="NCBIfam" id="NF004412">
    <property type="entry name" value="PRK05759.1-3"/>
    <property type="match status" value="1"/>
</dbReference>
<dbReference type="PANTHER" id="PTHR33445:SF1">
    <property type="entry name" value="ATP SYNTHASE SUBUNIT B"/>
    <property type="match status" value="1"/>
</dbReference>
<dbReference type="PANTHER" id="PTHR33445">
    <property type="entry name" value="ATP SYNTHASE SUBUNIT B', CHLOROPLASTIC"/>
    <property type="match status" value="1"/>
</dbReference>
<dbReference type="Pfam" id="PF00430">
    <property type="entry name" value="ATP-synt_B"/>
    <property type="match status" value="1"/>
</dbReference>
<dbReference type="SUPFAM" id="SSF81573">
    <property type="entry name" value="F1F0 ATP synthase subunit B, membrane domain"/>
    <property type="match status" value="1"/>
</dbReference>
<sequence>MYEYSVLAAESGEDVNPLIPATYDIVWSVVCVAIIAVVFYKYVIPRLTKVLNERADKIEGGIAKAEAAQAEAQQTLEQYQQQLADARLEAARIREDARTQGQQILAQMRAEAQAESDRIVAAGHAQLEAQRQQILTELRSEVGRTAVDLAEKIIGQSVSDEAKQAASIERFLSELDSSDAGIGVGR</sequence>
<name>ATPF_NOCFA</name>